<protein>
    <recommendedName>
        <fullName evidence="1">ATP-dependent protease subunit HslV</fullName>
        <ecNumber evidence="1">3.4.25.2</ecNumber>
    </recommendedName>
</protein>
<keyword id="KW-0021">Allosteric enzyme</keyword>
<keyword id="KW-0963">Cytoplasm</keyword>
<keyword id="KW-0378">Hydrolase</keyword>
<keyword id="KW-0479">Metal-binding</keyword>
<keyword id="KW-0645">Protease</keyword>
<keyword id="KW-0915">Sodium</keyword>
<keyword id="KW-0346">Stress response</keyword>
<keyword id="KW-0888">Threonine protease</keyword>
<feature type="chain" id="PRO_1000012582" description="ATP-dependent protease subunit HslV">
    <location>
        <begin position="1"/>
        <end position="182"/>
    </location>
</feature>
<feature type="active site" evidence="1">
    <location>
        <position position="6"/>
    </location>
</feature>
<feature type="binding site" evidence="1">
    <location>
        <position position="164"/>
    </location>
    <ligand>
        <name>Na(+)</name>
        <dbReference type="ChEBI" id="CHEBI:29101"/>
    </ligand>
</feature>
<feature type="binding site" evidence="1">
    <location>
        <position position="167"/>
    </location>
    <ligand>
        <name>Na(+)</name>
        <dbReference type="ChEBI" id="CHEBI:29101"/>
    </ligand>
</feature>
<feature type="binding site" evidence="1">
    <location>
        <position position="170"/>
    </location>
    <ligand>
        <name>Na(+)</name>
        <dbReference type="ChEBI" id="CHEBI:29101"/>
    </ligand>
</feature>
<accession>Q0SNL5</accession>
<accession>G0IRL4</accession>
<sequence>MGFKGTTVIAIKKNGKTVVAADGQVTFGHTVLKSNAIKIRKLLNGKILAGFAGSTSDAITLFEKFEEKIKAKGDGLVDIKRAAVDLAKDWRSDKILHKLEAMMLVADSKNILLISGTGDVVEPEEDVVSIGSGGNYAYSAALAYMENKKLSAFEVALRSLKIAARVCIYTNSNIVLEEIENE</sequence>
<organism>
    <name type="scientific">Borreliella afzelii (strain PKo)</name>
    <name type="common">Borrelia afzelii</name>
    <dbReference type="NCBI Taxonomy" id="390236"/>
    <lineage>
        <taxon>Bacteria</taxon>
        <taxon>Pseudomonadati</taxon>
        <taxon>Spirochaetota</taxon>
        <taxon>Spirochaetia</taxon>
        <taxon>Spirochaetales</taxon>
        <taxon>Borreliaceae</taxon>
        <taxon>Borreliella</taxon>
    </lineage>
</organism>
<proteinExistence type="inferred from homology"/>
<name>HSLV_BORAP</name>
<dbReference type="EC" id="3.4.25.2" evidence="1"/>
<dbReference type="EMBL" id="CP000395">
    <property type="protein sequence ID" value="ABH01563.1"/>
    <property type="molecule type" value="Genomic_DNA"/>
</dbReference>
<dbReference type="EMBL" id="CP002933">
    <property type="protein sequence ID" value="AEL69524.1"/>
    <property type="molecule type" value="Genomic_DNA"/>
</dbReference>
<dbReference type="RefSeq" id="WP_011600942.1">
    <property type="nucleotide sequence ID" value="NZ_CP160066.1"/>
</dbReference>
<dbReference type="SMR" id="Q0SNL5"/>
<dbReference type="STRING" id="29518.BLA32_02815"/>
<dbReference type="GeneID" id="77265137"/>
<dbReference type="KEGG" id="baf:BAPKO_0306"/>
<dbReference type="KEGG" id="bafz:BafPKo_0298"/>
<dbReference type="PATRIC" id="fig|390236.22.peg.292"/>
<dbReference type="eggNOG" id="COG5405">
    <property type="taxonomic scope" value="Bacteria"/>
</dbReference>
<dbReference type="HOGENOM" id="CLU_093872_1_0_12"/>
<dbReference type="OrthoDB" id="9804884at2"/>
<dbReference type="Proteomes" id="UP000005216">
    <property type="component" value="Chromosome"/>
</dbReference>
<dbReference type="GO" id="GO:0009376">
    <property type="term" value="C:HslUV protease complex"/>
    <property type="evidence" value="ECO:0007669"/>
    <property type="project" value="UniProtKB-UniRule"/>
</dbReference>
<dbReference type="GO" id="GO:0005839">
    <property type="term" value="C:proteasome core complex"/>
    <property type="evidence" value="ECO:0007669"/>
    <property type="project" value="InterPro"/>
</dbReference>
<dbReference type="GO" id="GO:0046872">
    <property type="term" value="F:metal ion binding"/>
    <property type="evidence" value="ECO:0007669"/>
    <property type="project" value="UniProtKB-KW"/>
</dbReference>
<dbReference type="GO" id="GO:0004298">
    <property type="term" value="F:threonine-type endopeptidase activity"/>
    <property type="evidence" value="ECO:0007669"/>
    <property type="project" value="UniProtKB-KW"/>
</dbReference>
<dbReference type="GO" id="GO:0051603">
    <property type="term" value="P:proteolysis involved in protein catabolic process"/>
    <property type="evidence" value="ECO:0007669"/>
    <property type="project" value="InterPro"/>
</dbReference>
<dbReference type="CDD" id="cd01913">
    <property type="entry name" value="protease_HslV"/>
    <property type="match status" value="1"/>
</dbReference>
<dbReference type="Gene3D" id="3.60.20.10">
    <property type="entry name" value="Glutamine Phosphoribosylpyrophosphate, subunit 1, domain 1"/>
    <property type="match status" value="1"/>
</dbReference>
<dbReference type="HAMAP" id="MF_00248">
    <property type="entry name" value="HslV"/>
    <property type="match status" value="1"/>
</dbReference>
<dbReference type="InterPro" id="IPR022281">
    <property type="entry name" value="ATP-dep_Prtase_HsIV_su"/>
</dbReference>
<dbReference type="InterPro" id="IPR029055">
    <property type="entry name" value="Ntn_hydrolases_N"/>
</dbReference>
<dbReference type="InterPro" id="IPR001353">
    <property type="entry name" value="Proteasome_sua/b"/>
</dbReference>
<dbReference type="InterPro" id="IPR023333">
    <property type="entry name" value="Proteasome_suB-type"/>
</dbReference>
<dbReference type="NCBIfam" id="TIGR03692">
    <property type="entry name" value="ATP_dep_HslV"/>
    <property type="match status" value="1"/>
</dbReference>
<dbReference type="NCBIfam" id="NF003964">
    <property type="entry name" value="PRK05456.1"/>
    <property type="match status" value="1"/>
</dbReference>
<dbReference type="PANTHER" id="PTHR32194:SF0">
    <property type="entry name" value="ATP-DEPENDENT PROTEASE SUBUNIT HSLV"/>
    <property type="match status" value="1"/>
</dbReference>
<dbReference type="PANTHER" id="PTHR32194">
    <property type="entry name" value="METALLOPROTEASE TLDD"/>
    <property type="match status" value="1"/>
</dbReference>
<dbReference type="Pfam" id="PF00227">
    <property type="entry name" value="Proteasome"/>
    <property type="match status" value="1"/>
</dbReference>
<dbReference type="PIRSF" id="PIRSF039093">
    <property type="entry name" value="HslV"/>
    <property type="match status" value="1"/>
</dbReference>
<dbReference type="SUPFAM" id="SSF56235">
    <property type="entry name" value="N-terminal nucleophile aminohydrolases (Ntn hydrolases)"/>
    <property type="match status" value="1"/>
</dbReference>
<dbReference type="PROSITE" id="PS51476">
    <property type="entry name" value="PROTEASOME_BETA_2"/>
    <property type="match status" value="1"/>
</dbReference>
<gene>
    <name evidence="1" type="primary">hslV</name>
    <name type="ordered locus">BAPKO_0306</name>
    <name type="ordered locus">BafPKo_0298</name>
</gene>
<comment type="function">
    <text evidence="1">Protease subunit of a proteasome-like degradation complex believed to be a general protein degrading machinery.</text>
</comment>
<comment type="catalytic activity">
    <reaction evidence="1">
        <text>ATP-dependent cleavage of peptide bonds with broad specificity.</text>
        <dbReference type="EC" id="3.4.25.2"/>
    </reaction>
</comment>
<comment type="activity regulation">
    <text evidence="1">Allosterically activated by HslU binding.</text>
</comment>
<comment type="subunit">
    <text evidence="1">A double ring-shaped homohexamer of HslV is capped on each side by a ring-shaped HslU homohexamer. The assembly of the HslU/HslV complex is dependent on binding of ATP.</text>
</comment>
<comment type="subcellular location">
    <subcellularLocation>
        <location evidence="1">Cytoplasm</location>
    </subcellularLocation>
</comment>
<comment type="similarity">
    <text evidence="1">Belongs to the peptidase T1B family. HslV subfamily.</text>
</comment>
<evidence type="ECO:0000255" key="1">
    <source>
        <dbReference type="HAMAP-Rule" id="MF_00248"/>
    </source>
</evidence>
<reference key="1">
    <citation type="journal article" date="2006" name="BMC Genomics">
        <title>Comparative genome analysis: selection pressure on the Borrelia vls cassettes is essential for infectivity.</title>
        <authorList>
            <person name="Gloeckner G."/>
            <person name="Schulte-Spechtel U."/>
            <person name="Schilhabel M."/>
            <person name="Felder M."/>
            <person name="Suehnel J."/>
            <person name="Wilske B."/>
            <person name="Platzer M."/>
        </authorList>
    </citation>
    <scope>NUCLEOTIDE SEQUENCE [LARGE SCALE GENOMIC DNA]</scope>
    <source>
        <strain>PKo</strain>
    </source>
</reference>
<reference key="2">
    <citation type="journal article" date="2011" name="J. Bacteriol.">
        <title>Whole-genome sequences of two Borrelia afzelii and two Borrelia garinii Lyme disease agent isolates.</title>
        <authorList>
            <person name="Casjens S.R."/>
            <person name="Mongodin E.F."/>
            <person name="Qiu W.G."/>
            <person name="Dunn J.J."/>
            <person name="Luft B.J."/>
            <person name="Fraser-Liggett C.M."/>
            <person name="Schutzer S.E."/>
        </authorList>
    </citation>
    <scope>NUCLEOTIDE SEQUENCE [LARGE SCALE GENOMIC DNA]</scope>
    <source>
        <strain>PKo</strain>
    </source>
</reference>